<dbReference type="EMBL" id="DP000274">
    <property type="protein sequence ID" value="ABL76165.1"/>
    <property type="molecule type" value="Genomic_DNA"/>
</dbReference>
<dbReference type="Ensembl" id="ENSETET00000011935">
    <property type="protein sequence ID" value="ENSETEP00000009686"/>
    <property type="gene ID" value="ENSETEG00000011937"/>
</dbReference>
<dbReference type="HOGENOM" id="CLU_102582_0_0_1"/>
<dbReference type="OMA" id="MSGSKYV"/>
<dbReference type="TreeFam" id="TF315736"/>
<dbReference type="Proteomes" id="UP000694863">
    <property type="component" value="Unplaced"/>
</dbReference>
<dbReference type="GO" id="GO:0005901">
    <property type="term" value="C:caveola"/>
    <property type="evidence" value="ECO:0000250"/>
    <property type="project" value="UniProtKB"/>
</dbReference>
<dbReference type="GO" id="GO:0005783">
    <property type="term" value="C:endoplasmic reticulum"/>
    <property type="evidence" value="ECO:0007669"/>
    <property type="project" value="Ensembl"/>
</dbReference>
<dbReference type="GO" id="GO:0005768">
    <property type="term" value="C:endosome"/>
    <property type="evidence" value="ECO:0000250"/>
    <property type="project" value="UniProtKB"/>
</dbReference>
<dbReference type="GO" id="GO:0005925">
    <property type="term" value="C:focal adhesion"/>
    <property type="evidence" value="ECO:0007669"/>
    <property type="project" value="Ensembl"/>
</dbReference>
<dbReference type="GO" id="GO:0000139">
    <property type="term" value="C:Golgi membrane"/>
    <property type="evidence" value="ECO:0007669"/>
    <property type="project" value="UniProtKB-SubCell"/>
</dbReference>
<dbReference type="GO" id="GO:0045121">
    <property type="term" value="C:membrane raft"/>
    <property type="evidence" value="ECO:0000250"/>
    <property type="project" value="UniProtKB"/>
</dbReference>
<dbReference type="GO" id="GO:0048471">
    <property type="term" value="C:perinuclear region of cytoplasm"/>
    <property type="evidence" value="ECO:0007669"/>
    <property type="project" value="Ensembl"/>
</dbReference>
<dbReference type="GO" id="GO:0032991">
    <property type="term" value="C:protein-containing complex"/>
    <property type="evidence" value="ECO:0007669"/>
    <property type="project" value="Ensembl"/>
</dbReference>
<dbReference type="GO" id="GO:0042383">
    <property type="term" value="C:sarcolemma"/>
    <property type="evidence" value="ECO:0007669"/>
    <property type="project" value="TreeGrafter"/>
</dbReference>
<dbReference type="GO" id="GO:0051117">
    <property type="term" value="F:ATPase binding"/>
    <property type="evidence" value="ECO:0007669"/>
    <property type="project" value="Ensembl"/>
</dbReference>
<dbReference type="GO" id="GO:0042802">
    <property type="term" value="F:identical protein binding"/>
    <property type="evidence" value="ECO:0007669"/>
    <property type="project" value="Ensembl"/>
</dbReference>
<dbReference type="GO" id="GO:0070320">
    <property type="term" value="F:inward rectifier potassium channel inhibitor activity"/>
    <property type="evidence" value="ECO:0007669"/>
    <property type="project" value="Ensembl"/>
</dbReference>
<dbReference type="GO" id="GO:0060090">
    <property type="term" value="F:molecular adaptor activity"/>
    <property type="evidence" value="ECO:0007669"/>
    <property type="project" value="TreeGrafter"/>
</dbReference>
<dbReference type="GO" id="GO:0050998">
    <property type="term" value="F:nitric-oxide synthase binding"/>
    <property type="evidence" value="ECO:0007669"/>
    <property type="project" value="Ensembl"/>
</dbReference>
<dbReference type="GO" id="GO:0008142">
    <property type="term" value="F:oxysterol binding"/>
    <property type="evidence" value="ECO:0000250"/>
    <property type="project" value="UniProtKB"/>
</dbReference>
<dbReference type="GO" id="GO:0019901">
    <property type="term" value="F:protein kinase binding"/>
    <property type="evidence" value="ECO:0007669"/>
    <property type="project" value="Ensembl"/>
</dbReference>
<dbReference type="GO" id="GO:0030292">
    <property type="term" value="F:protein tyrosine kinase inhibitor activity"/>
    <property type="evidence" value="ECO:0007669"/>
    <property type="project" value="Ensembl"/>
</dbReference>
<dbReference type="GO" id="GO:0044877">
    <property type="term" value="F:protein-containing complex binding"/>
    <property type="evidence" value="ECO:0007669"/>
    <property type="project" value="Ensembl"/>
</dbReference>
<dbReference type="GO" id="GO:0005102">
    <property type="term" value="F:signaling receptor binding"/>
    <property type="evidence" value="ECO:0007669"/>
    <property type="project" value="Ensembl"/>
</dbReference>
<dbReference type="GO" id="GO:0031267">
    <property type="term" value="F:small GTPase binding"/>
    <property type="evidence" value="ECO:0007669"/>
    <property type="project" value="Ensembl"/>
</dbReference>
<dbReference type="GO" id="GO:0044325">
    <property type="term" value="F:transmembrane transporter binding"/>
    <property type="evidence" value="ECO:0007669"/>
    <property type="project" value="Ensembl"/>
</dbReference>
<dbReference type="GO" id="GO:0097190">
    <property type="term" value="P:apoptotic signaling pathway"/>
    <property type="evidence" value="ECO:0007669"/>
    <property type="project" value="Ensembl"/>
</dbReference>
<dbReference type="GO" id="GO:0060070">
    <property type="term" value="P:canonical Wnt signaling pathway"/>
    <property type="evidence" value="ECO:0007669"/>
    <property type="project" value="Ensembl"/>
</dbReference>
<dbReference type="GO" id="GO:0070836">
    <property type="term" value="P:caveola assembly"/>
    <property type="evidence" value="ECO:0007669"/>
    <property type="project" value="Ensembl"/>
</dbReference>
<dbReference type="GO" id="GO:0072584">
    <property type="term" value="P:caveolin-mediated endocytosis"/>
    <property type="evidence" value="ECO:0007669"/>
    <property type="project" value="Ensembl"/>
</dbReference>
<dbReference type="GO" id="GO:0030154">
    <property type="term" value="P:cell differentiation"/>
    <property type="evidence" value="ECO:0007669"/>
    <property type="project" value="TreeGrafter"/>
</dbReference>
<dbReference type="GO" id="GO:0071360">
    <property type="term" value="P:cellular response to exogenous dsRNA"/>
    <property type="evidence" value="ECO:0007669"/>
    <property type="project" value="Ensembl"/>
</dbReference>
<dbReference type="GO" id="GO:0071455">
    <property type="term" value="P:cellular response to hyperoxia"/>
    <property type="evidence" value="ECO:0007669"/>
    <property type="project" value="Ensembl"/>
</dbReference>
<dbReference type="GO" id="GO:0071218">
    <property type="term" value="P:cellular response to misfolded protein"/>
    <property type="evidence" value="ECO:0007669"/>
    <property type="project" value="Ensembl"/>
</dbReference>
<dbReference type="GO" id="GO:2000811">
    <property type="term" value="P:negative regulation of anoikis"/>
    <property type="evidence" value="ECO:0007669"/>
    <property type="project" value="Ensembl"/>
</dbReference>
<dbReference type="GO" id="GO:0001937">
    <property type="term" value="P:negative regulation of endothelial cell proliferation"/>
    <property type="evidence" value="ECO:0007669"/>
    <property type="project" value="TreeGrafter"/>
</dbReference>
<dbReference type="GO" id="GO:0048550">
    <property type="term" value="P:negative regulation of pinocytosis"/>
    <property type="evidence" value="ECO:0007669"/>
    <property type="project" value="Ensembl"/>
</dbReference>
<dbReference type="GO" id="GO:1901380">
    <property type="term" value="P:negative regulation of potassium ion transmembrane transport"/>
    <property type="evidence" value="ECO:0007669"/>
    <property type="project" value="Ensembl"/>
</dbReference>
<dbReference type="GO" id="GO:0031397">
    <property type="term" value="P:negative regulation of protein ubiquitination"/>
    <property type="evidence" value="ECO:0007669"/>
    <property type="project" value="Ensembl"/>
</dbReference>
<dbReference type="GO" id="GO:0043123">
    <property type="term" value="P:positive regulation of canonical NF-kappaB signal transduction"/>
    <property type="evidence" value="ECO:0007669"/>
    <property type="project" value="Ensembl"/>
</dbReference>
<dbReference type="GO" id="GO:0060355">
    <property type="term" value="P:positive regulation of cell adhesion molecule production"/>
    <property type="evidence" value="ECO:0007669"/>
    <property type="project" value="Ensembl"/>
</dbReference>
<dbReference type="GO" id="GO:0030335">
    <property type="term" value="P:positive regulation of cell migration"/>
    <property type="evidence" value="ECO:0007669"/>
    <property type="project" value="Ensembl"/>
</dbReference>
<dbReference type="GO" id="GO:0010875">
    <property type="term" value="P:positive regulation of cholesterol efflux"/>
    <property type="evidence" value="ECO:0007669"/>
    <property type="project" value="Ensembl"/>
</dbReference>
<dbReference type="GO" id="GO:1904294">
    <property type="term" value="P:positive regulation of ERAD pathway"/>
    <property type="evidence" value="ECO:0007669"/>
    <property type="project" value="Ensembl"/>
</dbReference>
<dbReference type="GO" id="GO:2001238">
    <property type="term" value="P:positive regulation of extrinsic apoptotic signaling pathway"/>
    <property type="evidence" value="ECO:0007669"/>
    <property type="project" value="Ensembl"/>
</dbReference>
<dbReference type="GO" id="GO:2001244">
    <property type="term" value="P:positive regulation of intrinsic apoptotic signaling pathway"/>
    <property type="evidence" value="ECO:0007669"/>
    <property type="project" value="Ensembl"/>
</dbReference>
<dbReference type="GO" id="GO:0031398">
    <property type="term" value="P:positive regulation of protein ubiquitination"/>
    <property type="evidence" value="ECO:0007669"/>
    <property type="project" value="Ensembl"/>
</dbReference>
<dbReference type="GO" id="GO:0034141">
    <property type="term" value="P:positive regulation of toll-like receptor 3 signaling pathway"/>
    <property type="evidence" value="ECO:0007669"/>
    <property type="project" value="Ensembl"/>
</dbReference>
<dbReference type="GO" id="GO:0031623">
    <property type="term" value="P:receptor internalization"/>
    <property type="evidence" value="ECO:0000250"/>
    <property type="project" value="UniProtKB"/>
</dbReference>
<dbReference type="GO" id="GO:0019065">
    <property type="term" value="P:receptor-mediated endocytosis of virus by host cell"/>
    <property type="evidence" value="ECO:0007669"/>
    <property type="project" value="Ensembl"/>
</dbReference>
<dbReference type="GO" id="GO:0030193">
    <property type="term" value="P:regulation of blood coagulation"/>
    <property type="evidence" value="ECO:0007669"/>
    <property type="project" value="Ensembl"/>
</dbReference>
<dbReference type="GO" id="GO:0051480">
    <property type="term" value="P:regulation of cytosolic calcium ion concentration"/>
    <property type="evidence" value="ECO:0007669"/>
    <property type="project" value="Ensembl"/>
</dbReference>
<dbReference type="GO" id="GO:2000535">
    <property type="term" value="P:regulation of entry of bacterium into host cell"/>
    <property type="evidence" value="ECO:0007669"/>
    <property type="project" value="Ensembl"/>
</dbReference>
<dbReference type="GO" id="GO:0098903">
    <property type="term" value="P:regulation of membrane repolarization during action potential"/>
    <property type="evidence" value="ECO:0007669"/>
    <property type="project" value="Ensembl"/>
</dbReference>
<dbReference type="GO" id="GO:1900027">
    <property type="term" value="P:regulation of ruffle assembly"/>
    <property type="evidence" value="ECO:0007669"/>
    <property type="project" value="Ensembl"/>
</dbReference>
<dbReference type="GO" id="GO:0009617">
    <property type="term" value="P:response to bacterium"/>
    <property type="evidence" value="ECO:0007669"/>
    <property type="project" value="Ensembl"/>
</dbReference>
<dbReference type="GO" id="GO:0043627">
    <property type="term" value="P:response to estrogen"/>
    <property type="evidence" value="ECO:0007669"/>
    <property type="project" value="Ensembl"/>
</dbReference>
<dbReference type="GO" id="GO:0032570">
    <property type="term" value="P:response to progesterone"/>
    <property type="evidence" value="ECO:0007669"/>
    <property type="project" value="Ensembl"/>
</dbReference>
<dbReference type="GO" id="GO:0031295">
    <property type="term" value="P:T cell costimulation"/>
    <property type="evidence" value="ECO:0000250"/>
    <property type="project" value="UniProtKB"/>
</dbReference>
<dbReference type="InterPro" id="IPR001612">
    <property type="entry name" value="Caveolin"/>
</dbReference>
<dbReference type="InterPro" id="IPR018361">
    <property type="entry name" value="Caveolin_CS"/>
</dbReference>
<dbReference type="PANTHER" id="PTHR10844">
    <property type="entry name" value="CAVEOLIN"/>
    <property type="match status" value="1"/>
</dbReference>
<dbReference type="PANTHER" id="PTHR10844:SF18">
    <property type="entry name" value="CAVEOLIN-1"/>
    <property type="match status" value="1"/>
</dbReference>
<dbReference type="Pfam" id="PF01146">
    <property type="entry name" value="Caveolin"/>
    <property type="match status" value="1"/>
</dbReference>
<dbReference type="PROSITE" id="PS01210">
    <property type="entry name" value="CAVEOLIN"/>
    <property type="match status" value="1"/>
</dbReference>
<evidence type="ECO:0000250" key="1"/>
<evidence type="ECO:0000250" key="2">
    <source>
        <dbReference type="UniProtKB" id="P41350"/>
    </source>
</evidence>
<evidence type="ECO:0000250" key="3">
    <source>
        <dbReference type="UniProtKB" id="P49817"/>
    </source>
</evidence>
<evidence type="ECO:0000250" key="4">
    <source>
        <dbReference type="UniProtKB" id="Q03135"/>
    </source>
</evidence>
<evidence type="ECO:0000250" key="5">
    <source>
        <dbReference type="UniProtKB" id="Q2IBA5"/>
    </source>
</evidence>
<evidence type="ECO:0000255" key="6"/>
<evidence type="ECO:0000305" key="7"/>
<protein>
    <recommendedName>
        <fullName>Caveolin-1</fullName>
    </recommendedName>
</protein>
<reference key="1">
    <citation type="submission" date="2006-12" db="EMBL/GenBank/DDBJ databases">
        <title>NISC comparative sequencing initiative.</title>
        <authorList>
            <person name="Antonellis A."/>
            <person name="Ayele K."/>
            <person name="Benjamin B."/>
            <person name="Blakesley R.W."/>
            <person name="Boakye A."/>
            <person name="Bouffard G.G."/>
            <person name="Brinkley C."/>
            <person name="Brooks S."/>
            <person name="Chu G."/>
            <person name="Coleman H."/>
            <person name="Engle J."/>
            <person name="Gestole M."/>
            <person name="Greene A."/>
            <person name="Guan X."/>
            <person name="Gupta J."/>
            <person name="Haghighi P."/>
            <person name="Han J."/>
            <person name="Hansen N."/>
            <person name="Ho S.-L."/>
            <person name="Hu P."/>
            <person name="Hunter G."/>
            <person name="Hurle B."/>
            <person name="Idol J.R."/>
            <person name="Kwong P."/>
            <person name="Laric P."/>
            <person name="Larson S."/>
            <person name="Lee-Lin S.-Q."/>
            <person name="Legaspi R."/>
            <person name="Madden M."/>
            <person name="Maduro Q.L."/>
            <person name="Maduro V.B."/>
            <person name="Margulies E.H."/>
            <person name="Masiello C."/>
            <person name="Maskeri B."/>
            <person name="McDowell J."/>
            <person name="Mojidi H.A."/>
            <person name="Mullikin J.C."/>
            <person name="Oestreicher J.S."/>
            <person name="Park M."/>
            <person name="Portnoy M.E."/>
            <person name="Prasad A."/>
            <person name="Puri O."/>
            <person name="Reddix-Dugue N."/>
            <person name="Schandler K."/>
            <person name="Schueler M.G."/>
            <person name="Sison C."/>
            <person name="Stantripop S."/>
            <person name="Stephen E."/>
            <person name="Taye A."/>
            <person name="Thomas J.W."/>
            <person name="Thomas P.J."/>
            <person name="Tsipouri V."/>
            <person name="Ung L."/>
            <person name="Vogt J.L."/>
            <person name="Wetherby K.D."/>
            <person name="Young A."/>
            <person name="Green E.D."/>
        </authorList>
    </citation>
    <scope>NUCLEOTIDE SEQUENCE [LARGE SCALE GENOMIC DNA]</scope>
</reference>
<name>CAV1_ECHTE</name>
<proteinExistence type="inferred from homology"/>
<gene>
    <name type="primary">CAV1</name>
</gene>
<feature type="initiator methionine" description="Removed" evidence="4">
    <location>
        <position position="1"/>
    </location>
</feature>
<feature type="chain" id="PRO_0000279728" description="Caveolin-1">
    <location>
        <begin position="2"/>
        <end position="178"/>
    </location>
</feature>
<feature type="topological domain" description="Cytoplasmic" evidence="6">
    <location>
        <begin position="2"/>
        <end position="104"/>
    </location>
</feature>
<feature type="intramembrane region" description="Helical" evidence="6">
    <location>
        <begin position="105"/>
        <end position="125"/>
    </location>
</feature>
<feature type="topological domain" description="Cytoplasmic" evidence="6">
    <location>
        <begin position="126"/>
        <end position="178"/>
    </location>
</feature>
<feature type="region of interest" description="Required for homooligomerization" evidence="4">
    <location>
        <begin position="2"/>
        <end position="94"/>
    </location>
</feature>
<feature type="region of interest" description="Interaction with CAVIN3" evidence="4">
    <location>
        <begin position="82"/>
        <end position="94"/>
    </location>
</feature>
<feature type="region of interest" description="Interacts with SPRY1, SPRY2, SPRY3 and SPRY4" evidence="3">
    <location>
        <begin position="131"/>
        <end position="142"/>
    </location>
</feature>
<feature type="region of interest" description="Interacts with SPRY1, SPRY2, and SPRY4" evidence="3">
    <location>
        <begin position="149"/>
        <end position="160"/>
    </location>
</feature>
<feature type="region of interest" description="Interacts with SPRY1, SPRY2, SPRY3 and SPRY4" evidence="3">
    <location>
        <begin position="167"/>
        <end position="178"/>
    </location>
</feature>
<feature type="modified residue" description="N-acetylserine" evidence="4">
    <location>
        <position position="2"/>
    </location>
</feature>
<feature type="modified residue" description="Phosphoserine" evidence="2">
    <location>
        <position position="2"/>
    </location>
</feature>
<feature type="modified residue" description="N6-acetyllysine; alternate" evidence="4">
    <location>
        <position position="5"/>
    </location>
</feature>
<feature type="modified residue" description="Phosphotyrosine" evidence="4">
    <location>
        <position position="6"/>
    </location>
</feature>
<feature type="modified residue" description="Phosphoserine" evidence="3">
    <location>
        <position position="9"/>
    </location>
</feature>
<feature type="modified residue" description="Phosphotyrosine; by ABL1" evidence="3">
    <location>
        <position position="14"/>
    </location>
</feature>
<feature type="modified residue" description="Phosphotyrosine" evidence="4">
    <location>
        <position position="25"/>
    </location>
</feature>
<feature type="lipid moiety-binding region" description="S-palmitoyl cysteine" evidence="1">
    <location>
        <position position="133"/>
    </location>
</feature>
<feature type="lipid moiety-binding region" description="S-palmitoyl cysteine" evidence="1">
    <location>
        <position position="143"/>
    </location>
</feature>
<feature type="lipid moiety-binding region" description="S-palmitoyl cysteine" evidence="1">
    <location>
        <position position="156"/>
    </location>
</feature>
<feature type="cross-link" description="Glycyl lysine isopeptide (Lys-Gly) (interchain with G-Cter in ubiquitin); alternate" evidence="4">
    <location>
        <position position="5"/>
    </location>
</feature>
<feature type="cross-link" description="Glycyl lysine isopeptide (Lys-Gly) (interchain with G-Cter in ubiquitin)" evidence="4">
    <location>
        <position position="26"/>
    </location>
</feature>
<feature type="cross-link" description="Glycyl lysine isopeptide (Lys-Gly) (interchain with G-Cter in ubiquitin)" evidence="4">
    <location>
        <position position="30"/>
    </location>
</feature>
<feature type="cross-link" description="Glycyl lysine isopeptide (Lys-Gly) (interchain with G-Cter in ubiquitin)" evidence="4">
    <location>
        <position position="39"/>
    </location>
</feature>
<feature type="cross-link" description="Glycyl lysine isopeptide (Lys-Gly) (interchain with G-Cter in ubiquitin)" evidence="4">
    <location>
        <position position="47"/>
    </location>
</feature>
<feature type="cross-link" description="Glycyl lysine isopeptide (Lys-Gly) (interchain with G-Cter in ubiquitin)" evidence="4">
    <location>
        <position position="57"/>
    </location>
</feature>
<comment type="function">
    <text evidence="3 4">May act as a scaffolding protein within caveolar membranes. Forms a stable heterooligomeric complex with CAV2 that targets to lipid rafts and drives caveolae formation. Mediates the recruitment of CAVIN proteins (CAVIN1/2/3/4) to the caveolae (By similarity). Interacts directly with G-protein alpha subunits and can functionally regulate their activity (By similarity). Involved in the costimulatory signal essential for T-cell receptor (TCR)-mediated T-cell activation. Its binding to DPP4 induces T-cell proliferation and NF-kappa-B activation in a T-cell receptor/CD3-dependent manner (By similarity). Recruits CTNNB1 to caveolar membranes and may regulate CTNNB1-mediated signaling through the Wnt pathway (By similarity). Negatively regulates TGFB1-mediated activation of SMAD2/3 by mediating the internalization of TGFBR1 from membrane rafts leading to its subsequent degradation (By similarity). Binds 20(S)-hydroxycholesterol (20(S)-OHC) (By similarity).</text>
</comment>
<comment type="subunit">
    <text evidence="2 3 4 5">Homooligomer. Interacts with GLIPR2. Interacts with NOSTRIN (By similarity). Interacts with SNAP25 and STX1A (By similarity). Interacts (via the N-terminus) with DPP4; the interaction is direct (By similarity). Interacts with CTNNB1, CDH1 and JUP. Interacts with PACSIN2; this interaction induces membrane tubulation (By similarity). Interacts with SLC7A9 (By similarity). Interacts with BMX and BTK. Interacts with TGFBR1. Interacts with CAVIN3 (via leucine-zipper domain) in a cholesterol-sensitive manner. Interacts with CAVIN1. Interacts with EHD2 in a cholesterol-dependent manner. Forms a ternary complex with UBXN6 and VCP; mediates CAV1 targeting to lysosomes for degradation. Interacts with ABCG1; this interaction regulates ABCG1-mediated cholesterol efflux (By similarity). Interacts with NEU3; this interaction enhances NEU3 sialidase activity within caveola. Interacts (via C-terminus) with SPRY1, SPRY2 (via C-terminus), SPRY3, and SPRY4 (By similarity). Interacts with IGFBP5; this interaction allows trafficking of IGFBP5 from the plasma membrane to the nucleus (By similarity).</text>
</comment>
<comment type="subcellular location">
    <subcellularLocation>
        <location evidence="1">Golgi apparatus membrane</location>
        <topology evidence="1">Peripheral membrane protein</topology>
    </subcellularLocation>
    <subcellularLocation>
        <location evidence="1">Cell membrane</location>
        <topology evidence="1">Peripheral membrane protein</topology>
    </subcellularLocation>
    <subcellularLocation>
        <location evidence="3">Membrane</location>
        <location evidence="3">Caveola</location>
        <topology evidence="1">Peripheral membrane protein</topology>
    </subcellularLocation>
    <subcellularLocation>
        <location evidence="4">Membrane raft</location>
    </subcellularLocation>
    <text evidence="1">Colocalized with DPP4 in membrane rafts. Potential hairpin-like structure in the membrane. Membrane protein of caveolae (By similarity).</text>
</comment>
<comment type="PTM">
    <text evidence="4">Phosphorylated at Tyr-14 by ABL1 in response to oxidative stress.</text>
</comment>
<comment type="PTM">
    <text evidence="4">Ubiquitinated. Undergo monoubiquitination and multi- and/or polyubiquitination. Monoubiquitination of N-terminal lysines promotes integration in a ternary complex with UBXN6 and VCP which promotes oligomeric CAV1 targeting to lysosomes for degradation. Ubiquitinated by ZNRF1; leading to degradation and modulation of the TLR4-mediated immune response.</text>
</comment>
<comment type="similarity">
    <text evidence="7">Belongs to the caveolin family.</text>
</comment>
<sequence>MSGGKYVDSEGHLYTLPIREQGNIYKPNNKAMAEDMNEKQVYDAHTKEIDLVNRDPKHLNDDVVKIDFEDVIAEPEGTHSFDGIWKASFTTFTVTKYWFYRLLSGIFGIPMALIWGVYFAILSFLHIWAVVPCIKSFLIEIQCISRVYSIYVHTFCDPLFEAIGKIFSNIRISTQKEI</sequence>
<organism>
    <name type="scientific">Echinops telfairi</name>
    <name type="common">Lesser hedgehog tenrec</name>
    <dbReference type="NCBI Taxonomy" id="9371"/>
    <lineage>
        <taxon>Eukaryota</taxon>
        <taxon>Metazoa</taxon>
        <taxon>Chordata</taxon>
        <taxon>Craniata</taxon>
        <taxon>Vertebrata</taxon>
        <taxon>Euteleostomi</taxon>
        <taxon>Mammalia</taxon>
        <taxon>Eutheria</taxon>
        <taxon>Afrotheria</taxon>
        <taxon>Tenrecidae</taxon>
        <taxon>Tenrecinae</taxon>
        <taxon>Echinops</taxon>
    </lineage>
</organism>
<keyword id="KW-0007">Acetylation</keyword>
<keyword id="KW-1003">Cell membrane</keyword>
<keyword id="KW-0333">Golgi apparatus</keyword>
<keyword id="KW-1017">Isopeptide bond</keyword>
<keyword id="KW-0449">Lipoprotein</keyword>
<keyword id="KW-0472">Membrane</keyword>
<keyword id="KW-0564">Palmitate</keyword>
<keyword id="KW-0597">Phosphoprotein</keyword>
<keyword id="KW-0832">Ubl conjugation</keyword>
<accession>A1X149</accession>